<feature type="chain" id="PRO_0000209057" description="Low affinity potassium transport system protein Kup">
    <location>
        <begin position="1"/>
        <end position="622"/>
    </location>
</feature>
<feature type="transmembrane region" description="Helical" evidence="1">
    <location>
        <begin position="9"/>
        <end position="29"/>
    </location>
</feature>
<feature type="transmembrane region" description="Helical" evidence="1">
    <location>
        <begin position="49"/>
        <end position="69"/>
    </location>
</feature>
<feature type="transmembrane region" description="Helical" evidence="1">
    <location>
        <begin position="103"/>
        <end position="123"/>
    </location>
</feature>
<feature type="transmembrane region" description="Helical" evidence="1">
    <location>
        <begin position="137"/>
        <end position="157"/>
    </location>
</feature>
<feature type="transmembrane region" description="Helical" evidence="1">
    <location>
        <begin position="165"/>
        <end position="185"/>
    </location>
</feature>
<feature type="transmembrane region" description="Helical" evidence="1">
    <location>
        <begin position="213"/>
        <end position="233"/>
    </location>
</feature>
<feature type="transmembrane region" description="Helical" evidence="1">
    <location>
        <begin position="247"/>
        <end position="267"/>
    </location>
</feature>
<feature type="transmembrane region" description="Helical" evidence="1">
    <location>
        <begin position="276"/>
        <end position="296"/>
    </location>
</feature>
<feature type="transmembrane region" description="Helical" evidence="1">
    <location>
        <begin position="337"/>
        <end position="357"/>
    </location>
</feature>
<feature type="transmembrane region" description="Helical" evidence="1">
    <location>
        <begin position="363"/>
        <end position="383"/>
    </location>
</feature>
<feature type="transmembrane region" description="Helical" evidence="1">
    <location>
        <begin position="396"/>
        <end position="416"/>
    </location>
</feature>
<feature type="transmembrane region" description="Helical" evidence="1">
    <location>
        <begin position="419"/>
        <end position="439"/>
    </location>
</feature>
<reference key="1">
    <citation type="journal article" date="2001" name="Nature">
        <title>Complete genome sequence of Salmonella enterica serovar Typhimurium LT2.</title>
        <authorList>
            <person name="McClelland M."/>
            <person name="Sanderson K.E."/>
            <person name="Spieth J."/>
            <person name="Clifton S.W."/>
            <person name="Latreille P."/>
            <person name="Courtney L."/>
            <person name="Porwollik S."/>
            <person name="Ali J."/>
            <person name="Dante M."/>
            <person name="Du F."/>
            <person name="Hou S."/>
            <person name="Layman D."/>
            <person name="Leonard S."/>
            <person name="Nguyen C."/>
            <person name="Scott K."/>
            <person name="Holmes A."/>
            <person name="Grewal N."/>
            <person name="Mulvaney E."/>
            <person name="Ryan E."/>
            <person name="Sun H."/>
            <person name="Florea L."/>
            <person name="Miller W."/>
            <person name="Stoneking T."/>
            <person name="Nhan M."/>
            <person name="Waterston R."/>
            <person name="Wilson R.K."/>
        </authorList>
    </citation>
    <scope>NUCLEOTIDE SEQUENCE [LARGE SCALE GENOMIC DNA]</scope>
    <source>
        <strain>LT2 / SGSC1412 / ATCC 700720</strain>
    </source>
</reference>
<evidence type="ECO:0000255" key="1">
    <source>
        <dbReference type="HAMAP-Rule" id="MF_01522"/>
    </source>
</evidence>
<evidence type="ECO:0000305" key="2"/>
<comment type="function">
    <text evidence="1">Responsible for the low-affinity transport of potassium into the cell. Likely operates as a K(+):H(+) symporter.</text>
</comment>
<comment type="catalytic activity">
    <reaction evidence="1">
        <text>K(+)(in) + H(+)(in) = K(+)(out) + H(+)(out)</text>
        <dbReference type="Rhea" id="RHEA:28490"/>
        <dbReference type="ChEBI" id="CHEBI:15378"/>
        <dbReference type="ChEBI" id="CHEBI:29103"/>
    </reaction>
    <physiologicalReaction direction="right-to-left" evidence="1">
        <dbReference type="Rhea" id="RHEA:28492"/>
    </physiologicalReaction>
</comment>
<comment type="subcellular location">
    <subcellularLocation>
        <location evidence="1">Cell inner membrane</location>
        <topology evidence="1">Multi-pass membrane protein</topology>
    </subcellularLocation>
</comment>
<comment type="similarity">
    <text evidence="1 2">Belongs to the HAK/KUP transporter (TC 2.A.72) family.</text>
</comment>
<organism>
    <name type="scientific">Salmonella typhimurium (strain LT2 / SGSC1412 / ATCC 700720)</name>
    <dbReference type="NCBI Taxonomy" id="99287"/>
    <lineage>
        <taxon>Bacteria</taxon>
        <taxon>Pseudomonadati</taxon>
        <taxon>Pseudomonadota</taxon>
        <taxon>Gammaproteobacteria</taxon>
        <taxon>Enterobacterales</taxon>
        <taxon>Enterobacteriaceae</taxon>
        <taxon>Salmonella</taxon>
    </lineage>
</organism>
<protein>
    <recommendedName>
        <fullName evidence="1">Low affinity potassium transport system protein Kup</fullName>
    </recommendedName>
    <alternativeName>
        <fullName evidence="1">Kup system potassium uptake protein</fullName>
    </alternativeName>
</protein>
<proteinExistence type="inferred from homology"/>
<accession>Q8ZKW1</accession>
<sequence>MSTDNKQSLPAITLAAIGVVYGDIGTSPLYTLRECLSGQFGFGVERDAVFGFLSLIFWLLIFVVSIKYLTFVMRADNAGEGGILTLMSLAGRNTSARTTSMLVIMGLIGGSFFYGEVVITPAISVMSAIEGLEIVAPQLDTWIVPLSIIVLTLLFMIQKHGTGMVGKLFAPIMLTWFLILAVLGLRSIIANPEVLHALNPVWAVRFFLEYKTVSFIALGAVVLSITGVEALYADMGHFGKFPIRLAWFTVVLPSLVLNYFGQGALLLKHPEAIKNPFFLLAPDWALIPLLILAALATVIASQAVISGVFSLTRQAVRLGYLSPMRIIHTSEMESGQIYIPFVNWLLYFAVVVVIVSFEHSSNLAAAYGIAVTGTMVLTSILSTTVARKNWHWNKYFVALILIAFLCVDIPLFSANLDKLLSGGWLPLSLGLIMFTIMTTWKSERFRLLRRMHEHGNSLEAMIASLEKSPPVRVPGTAVYMSRALSVIPFALLHNLKHNKVLHERVILLTLRTEDAPYVHNVRRVQIEQLSPTFWRVVASYGWRETPNVEEVFHRCGLEGLSCRMMETSFFMSHESLIVGKRPWYLRLRGKLYLLLQRNALRAPDQFEIPPNRVIELGTQVEI</sequence>
<keyword id="KW-0997">Cell inner membrane</keyword>
<keyword id="KW-1003">Cell membrane</keyword>
<keyword id="KW-0406">Ion transport</keyword>
<keyword id="KW-0472">Membrane</keyword>
<keyword id="KW-0630">Potassium</keyword>
<keyword id="KW-0633">Potassium transport</keyword>
<keyword id="KW-1185">Reference proteome</keyword>
<keyword id="KW-0769">Symport</keyword>
<keyword id="KW-0812">Transmembrane</keyword>
<keyword id="KW-1133">Transmembrane helix</keyword>
<keyword id="KW-0813">Transport</keyword>
<name>KUP_SALTY</name>
<gene>
    <name evidence="1" type="primary">kup</name>
    <name type="ordered locus">STM3880</name>
</gene>
<dbReference type="EMBL" id="AE006468">
    <property type="protein sequence ID" value="AAL22738.1"/>
    <property type="molecule type" value="Genomic_DNA"/>
</dbReference>
<dbReference type="RefSeq" id="NP_462779.1">
    <property type="nucleotide sequence ID" value="NC_003197.2"/>
</dbReference>
<dbReference type="RefSeq" id="WP_000102338.1">
    <property type="nucleotide sequence ID" value="NC_003197.2"/>
</dbReference>
<dbReference type="STRING" id="99287.STM3880"/>
<dbReference type="PaxDb" id="99287-STM3880"/>
<dbReference type="GeneID" id="1255407"/>
<dbReference type="KEGG" id="stm:STM3880"/>
<dbReference type="PATRIC" id="fig|99287.12.peg.4110"/>
<dbReference type="HOGENOM" id="CLU_008142_4_2_6"/>
<dbReference type="OMA" id="MLLLWKW"/>
<dbReference type="PhylomeDB" id="Q8ZKW1"/>
<dbReference type="BioCyc" id="SENT99287:STM3880-MONOMER"/>
<dbReference type="Proteomes" id="UP000001014">
    <property type="component" value="Chromosome"/>
</dbReference>
<dbReference type="GO" id="GO:0016020">
    <property type="term" value="C:membrane"/>
    <property type="evidence" value="ECO:0000318"/>
    <property type="project" value="GO_Central"/>
</dbReference>
<dbReference type="GO" id="GO:0005886">
    <property type="term" value="C:plasma membrane"/>
    <property type="evidence" value="ECO:0007669"/>
    <property type="project" value="UniProtKB-SubCell"/>
</dbReference>
<dbReference type="GO" id="GO:0015079">
    <property type="term" value="F:potassium ion transmembrane transporter activity"/>
    <property type="evidence" value="ECO:0000318"/>
    <property type="project" value="GO_Central"/>
</dbReference>
<dbReference type="GO" id="GO:0015293">
    <property type="term" value="F:symporter activity"/>
    <property type="evidence" value="ECO:0007669"/>
    <property type="project" value="UniProtKB-UniRule"/>
</dbReference>
<dbReference type="GO" id="GO:0006813">
    <property type="term" value="P:potassium ion transport"/>
    <property type="evidence" value="ECO:0000318"/>
    <property type="project" value="GO_Central"/>
</dbReference>
<dbReference type="HAMAP" id="MF_01522">
    <property type="entry name" value="Kup"/>
    <property type="match status" value="1"/>
</dbReference>
<dbReference type="InterPro" id="IPR003855">
    <property type="entry name" value="K+_transporter"/>
</dbReference>
<dbReference type="InterPro" id="IPR053952">
    <property type="entry name" value="K_trans_C"/>
</dbReference>
<dbReference type="InterPro" id="IPR053951">
    <property type="entry name" value="K_trans_N"/>
</dbReference>
<dbReference type="InterPro" id="IPR023051">
    <property type="entry name" value="Kup"/>
</dbReference>
<dbReference type="NCBIfam" id="TIGR00794">
    <property type="entry name" value="kup"/>
    <property type="match status" value="1"/>
</dbReference>
<dbReference type="NCBIfam" id="NF008015">
    <property type="entry name" value="PRK10745.1"/>
    <property type="match status" value="1"/>
</dbReference>
<dbReference type="PANTHER" id="PTHR30540:SF79">
    <property type="entry name" value="LOW AFFINITY POTASSIUM TRANSPORT SYSTEM PROTEIN KUP"/>
    <property type="match status" value="1"/>
</dbReference>
<dbReference type="PANTHER" id="PTHR30540">
    <property type="entry name" value="OSMOTIC STRESS POTASSIUM TRANSPORTER"/>
    <property type="match status" value="1"/>
</dbReference>
<dbReference type="Pfam" id="PF02705">
    <property type="entry name" value="K_trans"/>
    <property type="match status" value="1"/>
</dbReference>
<dbReference type="Pfam" id="PF22776">
    <property type="entry name" value="K_trans_C"/>
    <property type="match status" value="1"/>
</dbReference>